<feature type="chain" id="PRO_0000190269" description="Recombination protein RecR">
    <location>
        <begin position="1"/>
        <end position="195"/>
    </location>
</feature>
<feature type="domain" description="Toprim" evidence="1">
    <location>
        <begin position="76"/>
        <end position="171"/>
    </location>
</feature>
<feature type="zinc finger region" description="C4-type" evidence="1">
    <location>
        <begin position="53"/>
        <end position="68"/>
    </location>
</feature>
<comment type="function">
    <text evidence="1">May play a role in DNA repair. It seems to be involved in an RecBC-independent recombinational process of DNA repair. It may act with RecF and RecO.</text>
</comment>
<comment type="similarity">
    <text evidence="1">Belongs to the RecR family.</text>
</comment>
<comment type="sequence caution" evidence="2">
    <conflict type="erroneous initiation">
        <sequence resource="EMBL-CDS" id="AAV86454"/>
    </conflict>
</comment>
<reference key="1">
    <citation type="journal article" date="2005" name="Proc. Natl. Acad. Sci. U.S.A.">
        <title>Complete genome sequencing of Anaplasma marginale reveals that the surface is skewed to two superfamilies of outer membrane proteins.</title>
        <authorList>
            <person name="Brayton K.A."/>
            <person name="Kappmeyer L.S."/>
            <person name="Herndon D.R."/>
            <person name="Dark M.J."/>
            <person name="Tibbals D.L."/>
            <person name="Palmer G.H."/>
            <person name="McGuire T.C."/>
            <person name="Knowles D.P. Jr."/>
        </authorList>
    </citation>
    <scope>NUCLEOTIDE SEQUENCE [LARGE SCALE GENOMIC DNA]</scope>
    <source>
        <strain>St. Maries</strain>
    </source>
</reference>
<evidence type="ECO:0000255" key="1">
    <source>
        <dbReference type="HAMAP-Rule" id="MF_00017"/>
    </source>
</evidence>
<evidence type="ECO:0000305" key="2"/>
<organism>
    <name type="scientific">Anaplasma marginale (strain St. Maries)</name>
    <dbReference type="NCBI Taxonomy" id="234826"/>
    <lineage>
        <taxon>Bacteria</taxon>
        <taxon>Pseudomonadati</taxon>
        <taxon>Pseudomonadota</taxon>
        <taxon>Alphaproteobacteria</taxon>
        <taxon>Rickettsiales</taxon>
        <taxon>Anaplasmataceae</taxon>
        <taxon>Anaplasma</taxon>
    </lineage>
</organism>
<sequence length="195" mass="21185">MDITKLINLFAKLPSLGPASSRRIVLHLLRHRQDVMVPLAAGIRELEMHTKECTICHNLDTISPCSICSDKGRDQSIICVVEELGDLWAFERGRIYSGVYHVLGGALSALSGIGPEDLNLGGIVDRIRTHGVKEVIVATSNDMDGQVTCHYIAQMVKGTDAKVTRLACGIPLGGEIDYLDEGTLRAALSSRYVIT</sequence>
<dbReference type="EMBL" id="CP000030">
    <property type="protein sequence ID" value="AAV86454.1"/>
    <property type="status" value="ALT_INIT"/>
    <property type="molecule type" value="Genomic_DNA"/>
</dbReference>
<dbReference type="RefSeq" id="WP_010267368.1">
    <property type="nucleotide sequence ID" value="NZ_AFMU01000053.1"/>
</dbReference>
<dbReference type="SMR" id="Q5PB75"/>
<dbReference type="KEGG" id="ama:AM394"/>
<dbReference type="HOGENOM" id="CLU_060739_1_1_5"/>
<dbReference type="GO" id="GO:0003677">
    <property type="term" value="F:DNA binding"/>
    <property type="evidence" value="ECO:0007669"/>
    <property type="project" value="UniProtKB-UniRule"/>
</dbReference>
<dbReference type="GO" id="GO:0008270">
    <property type="term" value="F:zinc ion binding"/>
    <property type="evidence" value="ECO:0007669"/>
    <property type="project" value="UniProtKB-KW"/>
</dbReference>
<dbReference type="GO" id="GO:0006310">
    <property type="term" value="P:DNA recombination"/>
    <property type="evidence" value="ECO:0007669"/>
    <property type="project" value="UniProtKB-UniRule"/>
</dbReference>
<dbReference type="GO" id="GO:0006281">
    <property type="term" value="P:DNA repair"/>
    <property type="evidence" value="ECO:0007669"/>
    <property type="project" value="UniProtKB-UniRule"/>
</dbReference>
<dbReference type="CDD" id="cd01025">
    <property type="entry name" value="TOPRIM_recR"/>
    <property type="match status" value="1"/>
</dbReference>
<dbReference type="Gene3D" id="3.40.1360.10">
    <property type="match status" value="1"/>
</dbReference>
<dbReference type="Gene3D" id="1.10.8.420">
    <property type="entry name" value="RecR Domain 1"/>
    <property type="match status" value="1"/>
</dbReference>
<dbReference type="HAMAP" id="MF_00017">
    <property type="entry name" value="RecR"/>
    <property type="match status" value="1"/>
</dbReference>
<dbReference type="InterPro" id="IPR000093">
    <property type="entry name" value="DNA_Rcmb_RecR"/>
</dbReference>
<dbReference type="InterPro" id="IPR023627">
    <property type="entry name" value="Rcmb_RecR"/>
</dbReference>
<dbReference type="InterPro" id="IPR015967">
    <property type="entry name" value="Rcmb_RecR_Znf"/>
</dbReference>
<dbReference type="InterPro" id="IPR006171">
    <property type="entry name" value="TOPRIM_dom"/>
</dbReference>
<dbReference type="InterPro" id="IPR034137">
    <property type="entry name" value="TOPRIM_RecR"/>
</dbReference>
<dbReference type="NCBIfam" id="TIGR00615">
    <property type="entry name" value="recR"/>
    <property type="match status" value="1"/>
</dbReference>
<dbReference type="PANTHER" id="PTHR30446">
    <property type="entry name" value="RECOMBINATION PROTEIN RECR"/>
    <property type="match status" value="1"/>
</dbReference>
<dbReference type="PANTHER" id="PTHR30446:SF0">
    <property type="entry name" value="RECOMBINATION PROTEIN RECR"/>
    <property type="match status" value="1"/>
</dbReference>
<dbReference type="Pfam" id="PF21175">
    <property type="entry name" value="RecR_C"/>
    <property type="match status" value="1"/>
</dbReference>
<dbReference type="Pfam" id="PF21176">
    <property type="entry name" value="RecR_HhH"/>
    <property type="match status" value="1"/>
</dbReference>
<dbReference type="Pfam" id="PF02132">
    <property type="entry name" value="RecR_ZnF"/>
    <property type="match status" value="1"/>
</dbReference>
<dbReference type="Pfam" id="PF13662">
    <property type="entry name" value="Toprim_4"/>
    <property type="match status" value="1"/>
</dbReference>
<dbReference type="SMART" id="SM00493">
    <property type="entry name" value="TOPRIM"/>
    <property type="match status" value="1"/>
</dbReference>
<dbReference type="SUPFAM" id="SSF111304">
    <property type="entry name" value="Recombination protein RecR"/>
    <property type="match status" value="1"/>
</dbReference>
<dbReference type="PROSITE" id="PS01300">
    <property type="entry name" value="RECR"/>
    <property type="match status" value="1"/>
</dbReference>
<dbReference type="PROSITE" id="PS50880">
    <property type="entry name" value="TOPRIM"/>
    <property type="match status" value="1"/>
</dbReference>
<gene>
    <name evidence="1" type="primary">recR</name>
    <name type="ordered locus">AM394</name>
</gene>
<keyword id="KW-0227">DNA damage</keyword>
<keyword id="KW-0233">DNA recombination</keyword>
<keyword id="KW-0234">DNA repair</keyword>
<keyword id="KW-0479">Metal-binding</keyword>
<keyword id="KW-0862">Zinc</keyword>
<keyword id="KW-0863">Zinc-finger</keyword>
<name>RECR_ANAMM</name>
<accession>Q5PB75</accession>
<proteinExistence type="inferred from homology"/>
<protein>
    <recommendedName>
        <fullName evidence="1">Recombination protein RecR</fullName>
    </recommendedName>
</protein>